<dbReference type="EC" id="3.1.-.-" evidence="1"/>
<dbReference type="EMBL" id="AP006627">
    <property type="protein sequence ID" value="BAD64129.1"/>
    <property type="molecule type" value="Genomic_DNA"/>
</dbReference>
<dbReference type="SMR" id="Q5WHM6"/>
<dbReference type="STRING" id="66692.ABC1594"/>
<dbReference type="KEGG" id="bcl:ABC1594"/>
<dbReference type="eggNOG" id="COG0816">
    <property type="taxonomic scope" value="Bacteria"/>
</dbReference>
<dbReference type="HOGENOM" id="CLU_098240_2_0_9"/>
<dbReference type="OrthoDB" id="9796140at2"/>
<dbReference type="Proteomes" id="UP000001168">
    <property type="component" value="Chromosome"/>
</dbReference>
<dbReference type="GO" id="GO:0005829">
    <property type="term" value="C:cytosol"/>
    <property type="evidence" value="ECO:0007669"/>
    <property type="project" value="TreeGrafter"/>
</dbReference>
<dbReference type="GO" id="GO:0004518">
    <property type="term" value="F:nuclease activity"/>
    <property type="evidence" value="ECO:0007669"/>
    <property type="project" value="UniProtKB-KW"/>
</dbReference>
<dbReference type="GO" id="GO:0000967">
    <property type="term" value="P:rRNA 5'-end processing"/>
    <property type="evidence" value="ECO:0007669"/>
    <property type="project" value="UniProtKB-UniRule"/>
</dbReference>
<dbReference type="CDD" id="cd16964">
    <property type="entry name" value="YqgF"/>
    <property type="match status" value="1"/>
</dbReference>
<dbReference type="Gene3D" id="3.30.420.140">
    <property type="entry name" value="YqgF/RNase H-like domain"/>
    <property type="match status" value="1"/>
</dbReference>
<dbReference type="HAMAP" id="MF_00651">
    <property type="entry name" value="Nuclease_YqgF"/>
    <property type="match status" value="1"/>
</dbReference>
<dbReference type="InterPro" id="IPR012337">
    <property type="entry name" value="RNaseH-like_sf"/>
</dbReference>
<dbReference type="InterPro" id="IPR005227">
    <property type="entry name" value="YqgF"/>
</dbReference>
<dbReference type="InterPro" id="IPR006641">
    <property type="entry name" value="YqgF/RNaseH-like_dom"/>
</dbReference>
<dbReference type="InterPro" id="IPR037027">
    <property type="entry name" value="YqgF/RNaseH-like_dom_sf"/>
</dbReference>
<dbReference type="NCBIfam" id="TIGR00250">
    <property type="entry name" value="RNAse_H_YqgF"/>
    <property type="match status" value="1"/>
</dbReference>
<dbReference type="PANTHER" id="PTHR33317">
    <property type="entry name" value="POLYNUCLEOTIDYL TRANSFERASE, RIBONUCLEASE H-LIKE SUPERFAMILY PROTEIN"/>
    <property type="match status" value="1"/>
</dbReference>
<dbReference type="PANTHER" id="PTHR33317:SF4">
    <property type="entry name" value="POLYNUCLEOTIDYL TRANSFERASE, RIBONUCLEASE H-LIKE SUPERFAMILY PROTEIN"/>
    <property type="match status" value="1"/>
</dbReference>
<dbReference type="Pfam" id="PF03652">
    <property type="entry name" value="RuvX"/>
    <property type="match status" value="1"/>
</dbReference>
<dbReference type="SMART" id="SM00732">
    <property type="entry name" value="YqgFc"/>
    <property type="match status" value="1"/>
</dbReference>
<dbReference type="SUPFAM" id="SSF53098">
    <property type="entry name" value="Ribonuclease H-like"/>
    <property type="match status" value="1"/>
</dbReference>
<keyword id="KW-0963">Cytoplasm</keyword>
<keyword id="KW-0378">Hydrolase</keyword>
<keyword id="KW-0540">Nuclease</keyword>
<keyword id="KW-1185">Reference proteome</keyword>
<keyword id="KW-0690">Ribosome biogenesis</keyword>
<evidence type="ECO:0000255" key="1">
    <source>
        <dbReference type="HAMAP-Rule" id="MF_00651"/>
    </source>
</evidence>
<proteinExistence type="inferred from homology"/>
<accession>Q5WHM6</accession>
<organism>
    <name type="scientific">Shouchella clausii (strain KSM-K16)</name>
    <name type="common">Alkalihalobacillus clausii</name>
    <dbReference type="NCBI Taxonomy" id="66692"/>
    <lineage>
        <taxon>Bacteria</taxon>
        <taxon>Bacillati</taxon>
        <taxon>Bacillota</taxon>
        <taxon>Bacilli</taxon>
        <taxon>Bacillales</taxon>
        <taxon>Bacillaceae</taxon>
        <taxon>Shouchella</taxon>
    </lineage>
</organism>
<reference key="1">
    <citation type="submission" date="2003-10" db="EMBL/GenBank/DDBJ databases">
        <title>The complete genome sequence of the alkaliphilic Bacillus clausii KSM-K16.</title>
        <authorList>
            <person name="Takaki Y."/>
            <person name="Kageyama Y."/>
            <person name="Shimamura S."/>
            <person name="Suzuki H."/>
            <person name="Nishi S."/>
            <person name="Hatada Y."/>
            <person name="Kawai S."/>
            <person name="Ito S."/>
            <person name="Horikoshi K."/>
        </authorList>
    </citation>
    <scope>NUCLEOTIDE SEQUENCE [LARGE SCALE GENOMIC DNA]</scope>
    <source>
        <strain>KSM-K16</strain>
    </source>
</reference>
<gene>
    <name type="ordered locus">ABC1594</name>
</gene>
<sequence length="142" mass="15726">MKTIGLDVGTKTIGVAISDAFGWTAQGLPTIQRSEDDPNRDFEALAQLIKENDVQKVVIGYPKNMNGTVGESATRSETFARTLEQQCNVQTVLWDERLTTAAAQRVLIDADVSRKKRKKAVDKMAAVFILQGYLDRQSHTLT</sequence>
<feature type="chain" id="PRO_0000172022" description="Putative pre-16S rRNA nuclease">
    <location>
        <begin position="1"/>
        <end position="142"/>
    </location>
</feature>
<name>YQGF_SHOC1</name>
<protein>
    <recommendedName>
        <fullName evidence="1">Putative pre-16S rRNA nuclease</fullName>
        <ecNumber evidence="1">3.1.-.-</ecNumber>
    </recommendedName>
</protein>
<comment type="function">
    <text evidence="1">Could be a nuclease involved in processing of the 5'-end of pre-16S rRNA.</text>
</comment>
<comment type="subcellular location">
    <subcellularLocation>
        <location evidence="1">Cytoplasm</location>
    </subcellularLocation>
</comment>
<comment type="similarity">
    <text evidence="1">Belongs to the YqgF nuclease family.</text>
</comment>